<proteinExistence type="inferred from homology"/>
<keyword id="KW-0175">Coiled coil</keyword>
<keyword id="KW-0967">Endosome</keyword>
<keyword id="KW-0813">Transport</keyword>
<reference key="1">
    <citation type="journal article" date="2011" name="PLoS Genet.">
        <title>Whole-genome comparison reveals novel genetic elements that characterize the genome of industrial strains of Saccharomyces cerevisiae.</title>
        <authorList>
            <person name="Borneman A.R."/>
            <person name="Desany B.A."/>
            <person name="Riches D."/>
            <person name="Affourtit J.P."/>
            <person name="Forgan A.H."/>
            <person name="Pretorius I.S."/>
            <person name="Egholm M."/>
            <person name="Chambers P.J."/>
        </authorList>
    </citation>
    <scope>NUCLEOTIDE SEQUENCE [LARGE SCALE GENOMIC DNA]</scope>
    <source>
        <strain>Zymaflore VL3</strain>
    </source>
</reference>
<sequence length="113" mass="13521">MGEQNKLYYDVEKLVNSLQESFDLDCAQSVSLFTSKSRSNEAWLEELENKFKLKDDVELDDVENLRAEIDMKLNMLEDKVSYYERLYKELEEFQNEIKIKTVVNNRRQSRTPK</sequence>
<comment type="function">
    <text evidence="1">Component of the biogenesis of lysosome-related organelles complex-1 (BLOC-1) involved in endosomal cargo sorting.</text>
</comment>
<comment type="subunit">
    <text evidence="1">Component of the biogenesis of lysosome-related organelles complex-1 (BLOC-1) composed of at least BLI1, BLS1, CNL1, KXD1, SNN1 and VAB2.</text>
</comment>
<comment type="subcellular location">
    <subcellularLocation>
        <location evidence="1">Endosome</location>
    </subcellularLocation>
</comment>
<comment type="similarity">
    <text evidence="3">Belongs to the BLI1 family.</text>
</comment>
<protein>
    <recommendedName>
        <fullName>Biogenesis of lysosome-related organelles complex 1 subunit BLI1</fullName>
        <shortName>BLOC-1 subunit BLI1</shortName>
    </recommendedName>
    <alternativeName>
        <fullName>BLOC-1 interactor 1</fullName>
    </alternativeName>
</protein>
<accession>E7QH95</accession>
<dbReference type="EMBL" id="AEJS01000045">
    <property type="protein sequence ID" value="EGA85935.1"/>
    <property type="molecule type" value="Genomic_DNA"/>
</dbReference>
<dbReference type="HOGENOM" id="CLU_168467_0_0_1"/>
<dbReference type="OrthoDB" id="4059150at2759"/>
<dbReference type="GO" id="GO:0005768">
    <property type="term" value="C:endosome"/>
    <property type="evidence" value="ECO:0007669"/>
    <property type="project" value="UniProtKB-SubCell"/>
</dbReference>
<dbReference type="InterPro" id="IPR020491">
    <property type="entry name" value="BLI1"/>
</dbReference>
<dbReference type="Pfam" id="PF17324">
    <property type="entry name" value="BLI1"/>
    <property type="match status" value="1"/>
</dbReference>
<organism>
    <name type="scientific">Saccharomyces cerevisiae (strain Zymaflore VL3)</name>
    <name type="common">Baker's yeast</name>
    <dbReference type="NCBI Taxonomy" id="764100"/>
    <lineage>
        <taxon>Eukaryota</taxon>
        <taxon>Fungi</taxon>
        <taxon>Dikarya</taxon>
        <taxon>Ascomycota</taxon>
        <taxon>Saccharomycotina</taxon>
        <taxon>Saccharomycetes</taxon>
        <taxon>Saccharomycetales</taxon>
        <taxon>Saccharomycetaceae</taxon>
        <taxon>Saccharomyces</taxon>
    </lineage>
</organism>
<name>BLI1_YEASZ</name>
<evidence type="ECO:0000250" key="1"/>
<evidence type="ECO:0000255" key="2"/>
<evidence type="ECO:0000305" key="3"/>
<gene>
    <name type="primary">BLI1</name>
    <name type="ORF">VL3_2896</name>
</gene>
<feature type="chain" id="PRO_0000410626" description="Biogenesis of lysosome-related organelles complex 1 subunit BLI1">
    <location>
        <begin position="1"/>
        <end position="113"/>
    </location>
</feature>
<feature type="coiled-coil region" evidence="2">
    <location>
        <begin position="57"/>
        <end position="97"/>
    </location>
</feature>